<dbReference type="EMBL" id="CP000671">
    <property type="protein sequence ID" value="ABQ97648.1"/>
    <property type="molecule type" value="Genomic_DNA"/>
</dbReference>
<dbReference type="SMR" id="A5UA47"/>
<dbReference type="KEGG" id="hip:CGSHiEE_00780"/>
<dbReference type="HOGENOM" id="CLU_140930_0_0_6"/>
<dbReference type="GO" id="GO:0043590">
    <property type="term" value="C:bacterial nucleoid"/>
    <property type="evidence" value="ECO:0007669"/>
    <property type="project" value="UniProtKB-UniRule"/>
</dbReference>
<dbReference type="GO" id="GO:0005829">
    <property type="term" value="C:cytosol"/>
    <property type="evidence" value="ECO:0007669"/>
    <property type="project" value="TreeGrafter"/>
</dbReference>
<dbReference type="GO" id="GO:0003677">
    <property type="term" value="F:DNA binding"/>
    <property type="evidence" value="ECO:0007669"/>
    <property type="project" value="UniProtKB-UniRule"/>
</dbReference>
<dbReference type="FunFam" id="3.30.1310.10:FF:000001">
    <property type="entry name" value="Nucleoid-associated protein YbaB"/>
    <property type="match status" value="1"/>
</dbReference>
<dbReference type="Gene3D" id="3.30.1310.10">
    <property type="entry name" value="Nucleoid-associated protein YbaB-like domain"/>
    <property type="match status" value="1"/>
</dbReference>
<dbReference type="HAMAP" id="MF_00274">
    <property type="entry name" value="DNA_YbaB_EbfC"/>
    <property type="match status" value="1"/>
</dbReference>
<dbReference type="InterPro" id="IPR036894">
    <property type="entry name" value="YbaB-like_sf"/>
</dbReference>
<dbReference type="InterPro" id="IPR004401">
    <property type="entry name" value="YbaB/EbfC"/>
</dbReference>
<dbReference type="NCBIfam" id="TIGR00103">
    <property type="entry name" value="DNA_YbaB_EbfC"/>
    <property type="match status" value="1"/>
</dbReference>
<dbReference type="PANTHER" id="PTHR33449">
    <property type="entry name" value="NUCLEOID-ASSOCIATED PROTEIN YBAB"/>
    <property type="match status" value="1"/>
</dbReference>
<dbReference type="PANTHER" id="PTHR33449:SF1">
    <property type="entry name" value="NUCLEOID-ASSOCIATED PROTEIN YBAB"/>
    <property type="match status" value="1"/>
</dbReference>
<dbReference type="Pfam" id="PF02575">
    <property type="entry name" value="YbaB_DNA_bd"/>
    <property type="match status" value="1"/>
</dbReference>
<dbReference type="PIRSF" id="PIRSF004555">
    <property type="entry name" value="UCP004555"/>
    <property type="match status" value="1"/>
</dbReference>
<dbReference type="SUPFAM" id="SSF82607">
    <property type="entry name" value="YbaB-like"/>
    <property type="match status" value="1"/>
</dbReference>
<organism>
    <name type="scientific">Haemophilus influenzae (strain PittEE)</name>
    <dbReference type="NCBI Taxonomy" id="374930"/>
    <lineage>
        <taxon>Bacteria</taxon>
        <taxon>Pseudomonadati</taxon>
        <taxon>Pseudomonadota</taxon>
        <taxon>Gammaproteobacteria</taxon>
        <taxon>Pasteurellales</taxon>
        <taxon>Pasteurellaceae</taxon>
        <taxon>Haemophilus</taxon>
    </lineage>
</organism>
<accession>A5UA47</accession>
<reference key="1">
    <citation type="journal article" date="2007" name="Genome Biol.">
        <title>Characterization and modeling of the Haemophilus influenzae core and supragenomes based on the complete genomic sequences of Rd and 12 clinical nontypeable strains.</title>
        <authorList>
            <person name="Hogg J.S."/>
            <person name="Hu F.Z."/>
            <person name="Janto B."/>
            <person name="Boissy R."/>
            <person name="Hayes J."/>
            <person name="Keefe R."/>
            <person name="Post J.C."/>
            <person name="Ehrlich G.D."/>
        </authorList>
    </citation>
    <scope>NUCLEOTIDE SEQUENCE [LARGE SCALE GENOMIC DNA]</scope>
    <source>
        <strain>PittEE</strain>
    </source>
</reference>
<name>Y780_HAEIE</name>
<gene>
    <name type="ordered locus">CGSHiEE_00780</name>
</gene>
<keyword id="KW-0963">Cytoplasm</keyword>
<keyword id="KW-0238">DNA-binding</keyword>
<proteinExistence type="inferred from homology"/>
<protein>
    <recommendedName>
        <fullName evidence="1">Nucleoid-associated protein CGSHiEE_00780</fullName>
    </recommendedName>
</protein>
<comment type="function">
    <text evidence="1">Binds to DNA and alters its conformation. May be involved in regulation of gene expression, nucleoid organization and DNA protection.</text>
</comment>
<comment type="subunit">
    <text evidence="1">Homodimer.</text>
</comment>
<comment type="subcellular location">
    <subcellularLocation>
        <location evidence="1">Cytoplasm</location>
        <location evidence="1">Nucleoid</location>
    </subcellularLocation>
</comment>
<comment type="similarity">
    <text evidence="1">Belongs to the YbaB/EbfC family.</text>
</comment>
<evidence type="ECO:0000255" key="1">
    <source>
        <dbReference type="HAMAP-Rule" id="MF_00274"/>
    </source>
</evidence>
<feature type="chain" id="PRO_1000003747" description="Nucleoid-associated protein CGSHiEE_00780">
    <location>
        <begin position="1"/>
        <end position="109"/>
    </location>
</feature>
<sequence>MFGKGGLGGLMKQAQQMQEKMQKMQEEIAQLEVTGESGAGLVKIAINGAHNCRRIDIDPSLMEDDKEMLEDLIAAAFNDAVRRAEELQKEKMASVTAGMPLPPGMKFPF</sequence>